<keyword id="KW-0997">Cell inner membrane</keyword>
<keyword id="KW-1003">Cell membrane</keyword>
<keyword id="KW-0406">Ion transport</keyword>
<keyword id="KW-0408">Iron</keyword>
<keyword id="KW-0464">Manganese</keyword>
<keyword id="KW-0472">Membrane</keyword>
<keyword id="KW-1185">Reference proteome</keyword>
<keyword id="KW-0769">Symport</keyword>
<keyword id="KW-0812">Transmembrane</keyword>
<keyword id="KW-1133">Transmembrane helix</keyword>
<keyword id="KW-0813">Transport</keyword>
<evidence type="ECO:0000255" key="1">
    <source>
        <dbReference type="HAMAP-Rule" id="MF_00221"/>
    </source>
</evidence>
<evidence type="ECO:0000269" key="2">
    <source>
    </source>
</evidence>
<proteinExistence type="evidence at protein level"/>
<gene>
    <name evidence="1" type="primary">mntH</name>
    <name type="ordered locus">STM2408</name>
</gene>
<name>MNTH_SALTY</name>
<reference key="1">
    <citation type="journal article" date="2000" name="Mol. Microbiol.">
        <title>The NRAMP proteins of Salmonella typhimurium and Escherichia coli are selective manganese transporters involved in the response to reactive oxygen.</title>
        <authorList>
            <person name="Kehres D.G."/>
            <person name="Zaharik M.L."/>
            <person name="Finlay B.B."/>
            <person name="Maguire M.E."/>
        </authorList>
    </citation>
    <scope>NUCLEOTIDE SEQUENCE [GENOMIC DNA]</scope>
    <scope>FUNCTION AS A TRANSPORTER</scope>
    <source>
        <strain>LT2 / MM1255</strain>
    </source>
</reference>
<reference key="2">
    <citation type="journal article" date="2001" name="Nature">
        <title>Complete genome sequence of Salmonella enterica serovar Typhimurium LT2.</title>
        <authorList>
            <person name="McClelland M."/>
            <person name="Sanderson K.E."/>
            <person name="Spieth J."/>
            <person name="Clifton S.W."/>
            <person name="Latreille P."/>
            <person name="Courtney L."/>
            <person name="Porwollik S."/>
            <person name="Ali J."/>
            <person name="Dante M."/>
            <person name="Du F."/>
            <person name="Hou S."/>
            <person name="Layman D."/>
            <person name="Leonard S."/>
            <person name="Nguyen C."/>
            <person name="Scott K."/>
            <person name="Holmes A."/>
            <person name="Grewal N."/>
            <person name="Mulvaney E."/>
            <person name="Ryan E."/>
            <person name="Sun H."/>
            <person name="Florea L."/>
            <person name="Miller W."/>
            <person name="Stoneking T."/>
            <person name="Nhan M."/>
            <person name="Waterston R."/>
            <person name="Wilson R.K."/>
        </authorList>
    </citation>
    <scope>NUCLEOTIDE SEQUENCE [LARGE SCALE GENOMIC DNA]</scope>
    <source>
        <strain>LT2 / SGSC1412 / ATCC 700720</strain>
    </source>
</reference>
<feature type="chain" id="PRO_0000212633" description="Divalent metal cation transporter MntH">
    <location>
        <begin position="1"/>
        <end position="413"/>
    </location>
</feature>
<feature type="topological domain" description="Cytoplasmic" evidence="1">
    <location>
        <begin position="1"/>
        <end position="19"/>
    </location>
</feature>
<feature type="transmembrane region" description="Helical" evidence="1">
    <location>
        <begin position="20"/>
        <end position="39"/>
    </location>
</feature>
<feature type="topological domain" description="Periplasmic" evidence="1">
    <location>
        <begin position="40"/>
        <end position="51"/>
    </location>
</feature>
<feature type="transmembrane region" description="Helical" evidence="1">
    <location>
        <begin position="52"/>
        <end position="71"/>
    </location>
</feature>
<feature type="topological domain" description="Cytoplasmic" evidence="1">
    <location>
        <begin position="72"/>
        <end position="95"/>
    </location>
</feature>
<feature type="transmembrane region" description="Helical" evidence="1">
    <location>
        <begin position="96"/>
        <end position="118"/>
    </location>
</feature>
<feature type="topological domain" description="Periplasmic" evidence="1">
    <location>
        <begin position="119"/>
        <end position="125"/>
    </location>
</feature>
<feature type="transmembrane region" description="Helical" evidence="1">
    <location>
        <begin position="126"/>
        <end position="145"/>
    </location>
</feature>
<feature type="topological domain" description="Cytoplasmic" evidence="1">
    <location>
        <begin position="146"/>
        <end position="155"/>
    </location>
</feature>
<feature type="transmembrane region" description="Helical" evidence="1">
    <location>
        <begin position="156"/>
        <end position="175"/>
    </location>
</feature>
<feature type="topological domain" description="Periplasmic" evidence="1">
    <location>
        <begin position="176"/>
        <end position="196"/>
    </location>
</feature>
<feature type="transmembrane region" description="Helical" evidence="1">
    <location>
        <begin position="197"/>
        <end position="220"/>
    </location>
</feature>
<feature type="topological domain" description="Cytoplasmic" evidence="1">
    <location>
        <begin position="221"/>
        <end position="238"/>
    </location>
</feature>
<feature type="transmembrane region" description="Helical" evidence="1">
    <location>
        <begin position="239"/>
        <end position="258"/>
    </location>
</feature>
<feature type="topological domain" description="Periplasmic" evidence="1">
    <location>
        <begin position="259"/>
        <end position="276"/>
    </location>
</feature>
<feature type="transmembrane region" description="Helical" evidence="1">
    <location>
        <begin position="277"/>
        <end position="297"/>
    </location>
</feature>
<feature type="topological domain" description="Cytoplasmic" evidence="1">
    <location>
        <begin position="298"/>
        <end position="327"/>
    </location>
</feature>
<feature type="transmembrane region" description="Helical" evidence="1">
    <location>
        <begin position="328"/>
        <end position="344"/>
    </location>
</feature>
<feature type="topological domain" description="Periplasmic" evidence="1">
    <location>
        <begin position="345"/>
        <end position="350"/>
    </location>
</feature>
<feature type="transmembrane region" description="Helical" evidence="1">
    <location>
        <begin position="351"/>
        <end position="370"/>
    </location>
</feature>
<feature type="topological domain" description="Cytoplasmic" evidence="1">
    <location>
        <begin position="371"/>
        <end position="387"/>
    </location>
</feature>
<feature type="transmembrane region" description="Helical" evidence="1">
    <location>
        <begin position="388"/>
        <end position="406"/>
    </location>
</feature>
<feature type="topological domain" description="Periplasmic" evidence="1">
    <location>
        <begin position="407"/>
        <end position="413"/>
    </location>
</feature>
<protein>
    <recommendedName>
        <fullName evidence="1">Divalent metal cation transporter MntH</fullName>
    </recommendedName>
</protein>
<dbReference type="EMBL" id="AF161317">
    <property type="protein sequence ID" value="AAD46616.1"/>
    <property type="molecule type" value="Genomic_DNA"/>
</dbReference>
<dbReference type="EMBL" id="AE006468">
    <property type="protein sequence ID" value="AAL21308.1"/>
    <property type="molecule type" value="Genomic_DNA"/>
</dbReference>
<dbReference type="RefSeq" id="NP_461349.1">
    <property type="nucleotide sequence ID" value="NC_003197.2"/>
</dbReference>
<dbReference type="RefSeq" id="WP_000131735.1">
    <property type="nucleotide sequence ID" value="NC_003197.2"/>
</dbReference>
<dbReference type="SMR" id="Q9RPF4"/>
<dbReference type="STRING" id="99287.STM2408"/>
<dbReference type="PaxDb" id="99287-STM2408"/>
<dbReference type="GeneID" id="1253930"/>
<dbReference type="KEGG" id="stm:STM2408"/>
<dbReference type="PATRIC" id="fig|99287.12.peg.2550"/>
<dbReference type="HOGENOM" id="CLU_020088_2_0_6"/>
<dbReference type="OMA" id="STYLVWT"/>
<dbReference type="PhylomeDB" id="Q9RPF4"/>
<dbReference type="BioCyc" id="SENT99287:STM2408-MONOMER"/>
<dbReference type="Proteomes" id="UP000001014">
    <property type="component" value="Chromosome"/>
</dbReference>
<dbReference type="GO" id="GO:0005886">
    <property type="term" value="C:plasma membrane"/>
    <property type="evidence" value="ECO:0000318"/>
    <property type="project" value="GO_Central"/>
</dbReference>
<dbReference type="GO" id="GO:0015086">
    <property type="term" value="F:cadmium ion transmembrane transporter activity"/>
    <property type="evidence" value="ECO:0000318"/>
    <property type="project" value="GO_Central"/>
</dbReference>
<dbReference type="GO" id="GO:0005384">
    <property type="term" value="F:manganese ion transmembrane transporter activity"/>
    <property type="evidence" value="ECO:0000318"/>
    <property type="project" value="GO_Central"/>
</dbReference>
<dbReference type="GO" id="GO:0046872">
    <property type="term" value="F:metal ion binding"/>
    <property type="evidence" value="ECO:0007669"/>
    <property type="project" value="UniProtKB-UniRule"/>
</dbReference>
<dbReference type="GO" id="GO:0015293">
    <property type="term" value="F:symporter activity"/>
    <property type="evidence" value="ECO:0007669"/>
    <property type="project" value="UniProtKB-UniRule"/>
</dbReference>
<dbReference type="GO" id="GO:0034755">
    <property type="term" value="P:iron ion transmembrane transport"/>
    <property type="evidence" value="ECO:0000318"/>
    <property type="project" value="GO_Central"/>
</dbReference>
<dbReference type="GO" id="GO:0006828">
    <property type="term" value="P:manganese ion transport"/>
    <property type="evidence" value="ECO:0000318"/>
    <property type="project" value="GO_Central"/>
</dbReference>
<dbReference type="HAMAP" id="MF_00221">
    <property type="entry name" value="NRAMP"/>
    <property type="match status" value="1"/>
</dbReference>
<dbReference type="InterPro" id="IPR001046">
    <property type="entry name" value="NRAMP_fam"/>
</dbReference>
<dbReference type="NCBIfam" id="TIGR01197">
    <property type="entry name" value="nramp"/>
    <property type="match status" value="1"/>
</dbReference>
<dbReference type="NCBIfam" id="NF037982">
    <property type="entry name" value="Nramp_1"/>
    <property type="match status" value="1"/>
</dbReference>
<dbReference type="NCBIfam" id="NF001923">
    <property type="entry name" value="PRK00701.1"/>
    <property type="match status" value="1"/>
</dbReference>
<dbReference type="PANTHER" id="PTHR11706:SF33">
    <property type="entry name" value="NATURAL RESISTANCE-ASSOCIATED MACROPHAGE PROTEIN 2"/>
    <property type="match status" value="1"/>
</dbReference>
<dbReference type="PANTHER" id="PTHR11706">
    <property type="entry name" value="SOLUTE CARRIER PROTEIN FAMILY 11 MEMBER"/>
    <property type="match status" value="1"/>
</dbReference>
<dbReference type="Pfam" id="PF01566">
    <property type="entry name" value="Nramp"/>
    <property type="match status" value="1"/>
</dbReference>
<dbReference type="PRINTS" id="PR00447">
    <property type="entry name" value="NATRESASSCMP"/>
</dbReference>
<sequence>MTDNRVENSSGRAARKLRLALMGPAFIAAIGYIDPGNFATNIQAGASFGYQLLWVVVWANLMAMLIQILSAKLGIATGKNLAEQIRDHYPRPVVWFYWVQAEIIAMATDLAEFIGAAIGFKLILGVSLLQGAVLTGIATFLILMLQRRGQKPLEKVIGGLLLFVAAAYIVELFFSQPDMAQLGKGMVIPALPNPEAVFLAAGVLGATIMPHVIYLHSSLTQHLHGGTRQQRYSATKWDVAIAMTIAGFVNLAMMATAAAAFHFSGHTGIADLDQAYLTLEPLLSHAAATVFGLSLVAAGLSSTVVGTLAGQVVMQGFVRFHIPLWVRRTITMLPSFIVILMGLDPTRILVMSQVLLSFGIALALVPLLIFTSNATLMGELVNTRRVKQVGWIIVVLVVALNIWLLVGTVMGLS</sequence>
<comment type="function">
    <text evidence="1 2">H(+)-stimulated, divalent metal cation uptake system. Involved in manganese and iron uptake.</text>
</comment>
<comment type="subcellular location">
    <subcellularLocation>
        <location>Cell inner membrane</location>
        <topology>Multi-pass membrane protein</topology>
    </subcellularLocation>
</comment>
<comment type="similarity">
    <text evidence="1">Belongs to the NRAMP family.</text>
</comment>
<organism>
    <name type="scientific">Salmonella typhimurium (strain LT2 / SGSC1412 / ATCC 700720)</name>
    <dbReference type="NCBI Taxonomy" id="99287"/>
    <lineage>
        <taxon>Bacteria</taxon>
        <taxon>Pseudomonadati</taxon>
        <taxon>Pseudomonadota</taxon>
        <taxon>Gammaproteobacteria</taxon>
        <taxon>Enterobacterales</taxon>
        <taxon>Enterobacteriaceae</taxon>
        <taxon>Salmonella</taxon>
    </lineage>
</organism>
<accession>Q9RPF4</accession>